<reference key="1">
    <citation type="journal article" date="1998" name="J. Bacteriol.">
        <title>Identification of the gene encoding the alternative sigma factor sigmaB from Listeria monocytogenes and its role in osmotolerance.</title>
        <authorList>
            <person name="Becker L.A."/>
            <person name="Cetin M.S."/>
            <person name="Hutkins R.W."/>
            <person name="Benson A.K."/>
        </authorList>
    </citation>
    <scope>NUCLEOTIDE SEQUENCE [GENOMIC DNA]</scope>
    <source>
        <strain>LO4035</strain>
    </source>
</reference>
<reference key="2">
    <citation type="journal article" date="1998" name="J. Bacteriol.">
        <title>General stress transcription factor sigmaB and its role in acid tolerance and virulence of Listeria monocytogenes.</title>
        <authorList>
            <person name="Wiedmann M."/>
            <person name="Arvik T.J."/>
            <person name="Hurley R.J."/>
            <person name="Boor K.J."/>
        </authorList>
    </citation>
    <scope>NUCLEOTIDE SEQUENCE [GENOMIC DNA]</scope>
    <source>
        <strain>689426</strain>
    </source>
</reference>
<reference key="3">
    <citation type="submission" date="2002-09" db="EMBL/GenBank/DDBJ databases">
        <title>Comparative genomic analyses of the sigB operon in Gram-positive bacteria.</title>
        <authorList>
            <person name="Ferreira A."/>
            <person name="Gray M.J."/>
            <person name="Wiedmann M."/>
            <person name="Boor K.J."/>
        </authorList>
    </citation>
    <scope>NUCLEOTIDE SEQUENCE [GENOMIC DNA]</scope>
</reference>
<reference key="4">
    <citation type="journal article" date="2001" name="Science">
        <title>Comparative genomics of Listeria species.</title>
        <authorList>
            <person name="Glaser P."/>
            <person name="Frangeul L."/>
            <person name="Buchrieser C."/>
            <person name="Rusniok C."/>
            <person name="Amend A."/>
            <person name="Baquero F."/>
            <person name="Berche P."/>
            <person name="Bloecker H."/>
            <person name="Brandt P."/>
            <person name="Chakraborty T."/>
            <person name="Charbit A."/>
            <person name="Chetouani F."/>
            <person name="Couve E."/>
            <person name="de Daruvar A."/>
            <person name="Dehoux P."/>
            <person name="Domann E."/>
            <person name="Dominguez-Bernal G."/>
            <person name="Duchaud E."/>
            <person name="Durant L."/>
            <person name="Dussurget O."/>
            <person name="Entian K.-D."/>
            <person name="Fsihi H."/>
            <person name="Garcia-del Portillo F."/>
            <person name="Garrido P."/>
            <person name="Gautier L."/>
            <person name="Goebel W."/>
            <person name="Gomez-Lopez N."/>
            <person name="Hain T."/>
            <person name="Hauf J."/>
            <person name="Jackson D."/>
            <person name="Jones L.-M."/>
            <person name="Kaerst U."/>
            <person name="Kreft J."/>
            <person name="Kuhn M."/>
            <person name="Kunst F."/>
            <person name="Kurapkat G."/>
            <person name="Madueno E."/>
            <person name="Maitournam A."/>
            <person name="Mata Vicente J."/>
            <person name="Ng E."/>
            <person name="Nedjari H."/>
            <person name="Nordsiek G."/>
            <person name="Novella S."/>
            <person name="de Pablos B."/>
            <person name="Perez-Diaz J.-C."/>
            <person name="Purcell R."/>
            <person name="Remmel B."/>
            <person name="Rose M."/>
            <person name="Schlueter T."/>
            <person name="Simoes N."/>
            <person name="Tierrez A."/>
            <person name="Vazquez-Boland J.-A."/>
            <person name="Voss H."/>
            <person name="Wehland J."/>
            <person name="Cossart P."/>
        </authorList>
    </citation>
    <scope>NUCLEOTIDE SEQUENCE [LARGE SCALE GENOMIC DNA]</scope>
    <source>
        <strain>ATCC BAA-679 / EGD-e</strain>
    </source>
</reference>
<accession>Q8Y8K6</accession>
<accession>O88131</accession>
<gene>
    <name evidence="1" type="primary">rsbW</name>
    <name type="ordered locus">lmo0894</name>
</gene>
<evidence type="ECO:0000255" key="1">
    <source>
        <dbReference type="HAMAP-Rule" id="MF_00638"/>
    </source>
</evidence>
<name>RSBW_LISMO</name>
<proteinExistence type="inferred from homology"/>
<protein>
    <recommendedName>
        <fullName evidence="1">Serine-protein kinase RsbW</fullName>
        <ecNumber evidence="1">2.7.11.1</ecNumber>
    </recommendedName>
    <alternativeName>
        <fullName evidence="1">Anti-sigma-B factor</fullName>
    </alternativeName>
    <alternativeName>
        <fullName evidence="1">Sigma-B negative effector RsbW</fullName>
    </alternativeName>
</protein>
<organism>
    <name type="scientific">Listeria monocytogenes serovar 1/2a (strain ATCC BAA-679 / EGD-e)</name>
    <dbReference type="NCBI Taxonomy" id="169963"/>
    <lineage>
        <taxon>Bacteria</taxon>
        <taxon>Bacillati</taxon>
        <taxon>Bacillota</taxon>
        <taxon>Bacilli</taxon>
        <taxon>Bacillales</taxon>
        <taxon>Listeriaceae</taxon>
        <taxon>Listeria</taxon>
    </lineage>
</organism>
<feature type="chain" id="PRO_0000203535" description="Serine-protein kinase RsbW">
    <location>
        <begin position="1"/>
        <end position="157"/>
    </location>
</feature>
<feature type="sequence variant" description="In strain: 689426 and LO4035.">
    <original>E</original>
    <variation>D</variation>
    <location>
        <position position="63"/>
    </location>
</feature>
<feature type="sequence variant" description="In strain: 689426 and LO4035.">
    <original>D</original>
    <variation>E</variation>
    <location>
        <position position="102"/>
    </location>
</feature>
<dbReference type="EC" id="2.7.11.1" evidence="1"/>
<dbReference type="EMBL" id="AL591977">
    <property type="protein sequence ID" value="CAC98972.1"/>
    <property type="molecule type" value="Genomic_DNA"/>
</dbReference>
<dbReference type="EMBL" id="AF074855">
    <property type="protein sequence ID" value="AAC34826.1"/>
    <property type="molecule type" value="Genomic_DNA"/>
</dbReference>
<dbReference type="EMBL" id="AF032444">
    <property type="protein sequence ID" value="AAC38788.1"/>
    <property type="molecule type" value="Genomic_DNA"/>
</dbReference>
<dbReference type="EMBL" id="AY156593">
    <property type="protein sequence ID" value="AAN75463.1"/>
    <property type="molecule type" value="Genomic_DNA"/>
</dbReference>
<dbReference type="PIR" id="AF1186">
    <property type="entry name" value="AF1186"/>
</dbReference>
<dbReference type="RefSeq" id="NP_464420.1">
    <property type="nucleotide sequence ID" value="NC_003210.1"/>
</dbReference>
<dbReference type="RefSeq" id="WP_003721461.1">
    <property type="nucleotide sequence ID" value="NZ_CP149495.1"/>
</dbReference>
<dbReference type="SMR" id="Q8Y8K6"/>
<dbReference type="STRING" id="169963.gene:17593545"/>
<dbReference type="PaxDb" id="169963-lmo0894"/>
<dbReference type="EnsemblBacteria" id="CAC98972">
    <property type="protein sequence ID" value="CAC98972"/>
    <property type="gene ID" value="CAC98972"/>
</dbReference>
<dbReference type="GeneID" id="93238769"/>
<dbReference type="GeneID" id="986524"/>
<dbReference type="KEGG" id="lmo:lmo0894"/>
<dbReference type="PATRIC" id="fig|169963.11.peg.919"/>
<dbReference type="eggNOG" id="COG2172">
    <property type="taxonomic scope" value="Bacteria"/>
</dbReference>
<dbReference type="HOGENOM" id="CLU_090336_11_1_9"/>
<dbReference type="OrthoDB" id="9798941at2"/>
<dbReference type="PhylomeDB" id="Q8Y8K6"/>
<dbReference type="BioCyc" id="LMON169963:LMO0894-MONOMER"/>
<dbReference type="Proteomes" id="UP000000817">
    <property type="component" value="Chromosome"/>
</dbReference>
<dbReference type="GO" id="GO:0005524">
    <property type="term" value="F:ATP binding"/>
    <property type="evidence" value="ECO:0007669"/>
    <property type="project" value="UniProtKB-KW"/>
</dbReference>
<dbReference type="GO" id="GO:0106310">
    <property type="term" value="F:protein serine kinase activity"/>
    <property type="evidence" value="ECO:0007669"/>
    <property type="project" value="RHEA"/>
</dbReference>
<dbReference type="GO" id="GO:0004674">
    <property type="term" value="F:protein serine/threonine kinase activity"/>
    <property type="evidence" value="ECO:0007669"/>
    <property type="project" value="UniProtKB-KW"/>
</dbReference>
<dbReference type="GO" id="GO:0016989">
    <property type="term" value="F:sigma factor antagonist activity"/>
    <property type="evidence" value="ECO:0000318"/>
    <property type="project" value="GO_Central"/>
</dbReference>
<dbReference type="GO" id="GO:0045892">
    <property type="term" value="P:negative regulation of DNA-templated transcription"/>
    <property type="evidence" value="ECO:0000318"/>
    <property type="project" value="GO_Central"/>
</dbReference>
<dbReference type="CDD" id="cd16936">
    <property type="entry name" value="HATPase_RsbW-like"/>
    <property type="match status" value="1"/>
</dbReference>
<dbReference type="FunFam" id="3.30.565.10:FF:000026">
    <property type="entry name" value="Serine-protein kinase RsbW"/>
    <property type="match status" value="1"/>
</dbReference>
<dbReference type="Gene3D" id="3.30.565.10">
    <property type="entry name" value="Histidine kinase-like ATPase, C-terminal domain"/>
    <property type="match status" value="1"/>
</dbReference>
<dbReference type="HAMAP" id="MF_00638">
    <property type="entry name" value="Anti_sigma_B"/>
    <property type="match status" value="1"/>
</dbReference>
<dbReference type="InterPro" id="IPR050267">
    <property type="entry name" value="Anti-sigma-factor_SerPK"/>
</dbReference>
<dbReference type="InterPro" id="IPR036890">
    <property type="entry name" value="HATPase_C_sf"/>
</dbReference>
<dbReference type="InterPro" id="IPR010193">
    <property type="entry name" value="RsbW"/>
</dbReference>
<dbReference type="NCBIfam" id="NF003144">
    <property type="entry name" value="PRK04069.1"/>
    <property type="match status" value="1"/>
</dbReference>
<dbReference type="NCBIfam" id="TIGR01924">
    <property type="entry name" value="rsbW_low_gc"/>
    <property type="match status" value="1"/>
</dbReference>
<dbReference type="PANTHER" id="PTHR35526">
    <property type="entry name" value="ANTI-SIGMA-F FACTOR RSBW-RELATED"/>
    <property type="match status" value="1"/>
</dbReference>
<dbReference type="PANTHER" id="PTHR35526:SF9">
    <property type="entry name" value="SERINE-PROTEIN KINASE RSBW"/>
    <property type="match status" value="1"/>
</dbReference>
<dbReference type="Pfam" id="PF13581">
    <property type="entry name" value="HATPase_c_2"/>
    <property type="match status" value="1"/>
</dbReference>
<dbReference type="SUPFAM" id="SSF55874">
    <property type="entry name" value="ATPase domain of HSP90 chaperone/DNA topoisomerase II/histidine kinase"/>
    <property type="match status" value="1"/>
</dbReference>
<keyword id="KW-0067">ATP-binding</keyword>
<keyword id="KW-0418">Kinase</keyword>
<keyword id="KW-0547">Nucleotide-binding</keyword>
<keyword id="KW-1185">Reference proteome</keyword>
<keyword id="KW-0723">Serine/threonine-protein kinase</keyword>
<keyword id="KW-0808">Transferase</keyword>
<sequence>MATMHDKITLQLPAKPEYVSLGRLSLSGIASRAGFSYEAIEDLKIAVSEAITNSVKHAFKGEEDGEITVEYLIYEDKLEVRVSDNGTSFDLETRKQEIGPYDVGEDAEMMRIGGLGLFLIETLMDDVKLYYDEGVSVVMTKYINEKQVEENAKSIST</sequence>
<comment type="function">
    <text evidence="1">Negative regulator of sigma-B activity. Phosphorylates and inactivates its specific antagonist protein, RsbV. Upon phosphorylation of RsbV, RsbW is released and binds to sigma-B, thereby blocking its ability to form an RNA polymerase holoenzyme (E-sigma-B).</text>
</comment>
<comment type="catalytic activity">
    <reaction evidence="1">
        <text>L-seryl-[protein] + ATP = O-phospho-L-seryl-[protein] + ADP + H(+)</text>
        <dbReference type="Rhea" id="RHEA:17989"/>
        <dbReference type="Rhea" id="RHEA-COMP:9863"/>
        <dbReference type="Rhea" id="RHEA-COMP:11604"/>
        <dbReference type="ChEBI" id="CHEBI:15378"/>
        <dbReference type="ChEBI" id="CHEBI:29999"/>
        <dbReference type="ChEBI" id="CHEBI:30616"/>
        <dbReference type="ChEBI" id="CHEBI:83421"/>
        <dbReference type="ChEBI" id="CHEBI:456216"/>
        <dbReference type="EC" id="2.7.11.1"/>
    </reaction>
</comment>
<comment type="catalytic activity">
    <reaction evidence="1">
        <text>L-threonyl-[protein] + ATP = O-phospho-L-threonyl-[protein] + ADP + H(+)</text>
        <dbReference type="Rhea" id="RHEA:46608"/>
        <dbReference type="Rhea" id="RHEA-COMP:11060"/>
        <dbReference type="Rhea" id="RHEA-COMP:11605"/>
        <dbReference type="ChEBI" id="CHEBI:15378"/>
        <dbReference type="ChEBI" id="CHEBI:30013"/>
        <dbReference type="ChEBI" id="CHEBI:30616"/>
        <dbReference type="ChEBI" id="CHEBI:61977"/>
        <dbReference type="ChEBI" id="CHEBI:456216"/>
        <dbReference type="EC" id="2.7.11.1"/>
    </reaction>
</comment>
<comment type="similarity">
    <text evidence="1">Belongs to the anti-sigma-factor family.</text>
</comment>